<dbReference type="EMBL" id="AJ132844">
    <property type="protein sequence ID" value="CAB63086.1"/>
    <property type="molecule type" value="Genomic_RNA"/>
</dbReference>
<dbReference type="EMBL" id="AJ132844">
    <property type="protein sequence ID" value="CAB63085.1"/>
    <property type="molecule type" value="Genomic_RNA"/>
</dbReference>
<dbReference type="SMR" id="Q9Q2Q3"/>
<dbReference type="GO" id="GO:0044165">
    <property type="term" value="C:host cell endoplasmic reticulum"/>
    <property type="evidence" value="ECO:0007669"/>
    <property type="project" value="UniProtKB-SubCell"/>
</dbReference>
<dbReference type="GO" id="GO:0044219">
    <property type="term" value="C:host cell plasmodesma"/>
    <property type="evidence" value="ECO:0007669"/>
    <property type="project" value="UniProtKB-SubCell"/>
</dbReference>
<dbReference type="GO" id="GO:0039617">
    <property type="term" value="C:T=3 icosahedral viral capsid"/>
    <property type="evidence" value="ECO:0007669"/>
    <property type="project" value="UniProtKB-KW"/>
</dbReference>
<dbReference type="GO" id="GO:0003677">
    <property type="term" value="F:DNA binding"/>
    <property type="evidence" value="ECO:0007669"/>
    <property type="project" value="UniProtKB-KW"/>
</dbReference>
<dbReference type="GO" id="GO:0003723">
    <property type="term" value="F:RNA binding"/>
    <property type="evidence" value="ECO:0007669"/>
    <property type="project" value="UniProtKB-KW"/>
</dbReference>
<dbReference type="GO" id="GO:0005198">
    <property type="term" value="F:structural molecule activity"/>
    <property type="evidence" value="ECO:0007669"/>
    <property type="project" value="InterPro"/>
</dbReference>
<dbReference type="GO" id="GO:0052170">
    <property type="term" value="P:symbiont-mediated suppression of host innate immune response"/>
    <property type="evidence" value="ECO:0007669"/>
    <property type="project" value="UniProtKB-KW"/>
</dbReference>
<dbReference type="GO" id="GO:0046740">
    <property type="term" value="P:transport of virus in host, cell to cell"/>
    <property type="evidence" value="ECO:0007669"/>
    <property type="project" value="UniProtKB-KW"/>
</dbReference>
<dbReference type="Gene3D" id="2.60.120.20">
    <property type="match status" value="2"/>
</dbReference>
<dbReference type="InterPro" id="IPR003181">
    <property type="entry name" value="Como_LCP"/>
</dbReference>
<dbReference type="InterPro" id="IPR003182">
    <property type="entry name" value="RNA2_polyprotein"/>
</dbReference>
<dbReference type="InterPro" id="IPR029053">
    <property type="entry name" value="Viral_coat"/>
</dbReference>
<dbReference type="Pfam" id="PF02247">
    <property type="entry name" value="Como_LCP"/>
    <property type="match status" value="1"/>
</dbReference>
<dbReference type="Pfam" id="PF02248">
    <property type="entry name" value="Como_SCP"/>
    <property type="match status" value="1"/>
</dbReference>
<dbReference type="SUPFAM" id="SSF88633">
    <property type="entry name" value="Positive stranded ssRNA viruses"/>
    <property type="match status" value="3"/>
</dbReference>
<evidence type="ECO:0000250" key="1">
    <source>
        <dbReference type="UniProtKB" id="P03599"/>
    </source>
</evidence>
<evidence type="ECO:0000269" key="2">
    <source>
    </source>
</evidence>
<evidence type="ECO:0000269" key="3">
    <source>
    </source>
</evidence>
<evidence type="ECO:0000269" key="4">
    <source>
    </source>
</evidence>
<evidence type="ECO:0000269" key="5">
    <source>
    </source>
</evidence>
<evidence type="ECO:0000269" key="6">
    <source>
    </source>
</evidence>
<protein>
    <recommendedName>
        <fullName>RNA2 polyprotein</fullName>
    </recommendedName>
    <alternativeName>
        <fullName>119kDa protein</fullName>
    </alternativeName>
    <alternativeName>
        <fullName>Genome polyprotein M</fullName>
    </alternativeName>
    <component>
        <recommendedName>
            <fullName>VP53</fullName>
        </recommendedName>
        <alternativeName>
            <fullName>53 kDa protein</fullName>
        </alternativeName>
    </component>
    <component>
        <recommendedName>
            <fullName>Movement protein</fullName>
            <shortName>MP</shortName>
        </recommendedName>
        <alternativeName>
            <fullName>37 kDa protein</fullName>
        </alternativeName>
        <alternativeName>
            <fullName>VP37</fullName>
        </alternativeName>
    </component>
    <component>
        <recommendedName>
            <fullName>Large capsid protein</fullName>
            <shortName>LCP</shortName>
        </recommendedName>
        <alternativeName>
            <fullName>44 kDa protein</fullName>
        </alternativeName>
    </component>
    <component>
        <recommendedName>
            <fullName>Small capsid protein</fullName>
            <shortName>SCP</shortName>
        </recommendedName>
        <alternativeName>
            <fullName>22 kDa protein</fullName>
        </alternativeName>
    </component>
</protein>
<proteinExistence type="evidence at protein level"/>
<sequence length="1065" mass="119214">MRPELVAVLDRYFSEIISCFFLGWLLNFLLVWFCSTKSTFLLWSVFLYICYYILRIEFAYIVAPFLKTIYTNSSQYHTVDWAYAYTALPKGLWEQITDYNYCYNFPPPRVEGFVSDFSPRFTLKELEIMNEANITPVHTIPKDTLLKRASDYKLAVESKKSILPRVQDLYEMDKWHNLRSKLSKNAPSYVTTSEIAVGAMSGAGNTKLAIPVVEKYTEEVADDRLPDRVRAKADQIMVAAIELVADGFASVNSDVTMAGALYDKRHKTIASSFKGAFASRASGVPSHVIYFPMHRVPACDDPNTTLELSMVSRDSDFDEGYTLANISARTLYVRAKGPEKVTETRHLLKAKTEDVVKARQFASEAQVVFATPRLFPEVNLDNYNLPGPSNAQQTEAITTDRGILFPKPKFKGNEVVLNYTGSGKIRNVGSQRFETKKNATGEQFVRSVDDLGCLSDEDGKDYRYGQGLMEEDVLNVQTNNFAIESATETMRLLFSGYASIPLNVIPGTKITVAYLNELSKHSAVHTGLLNMLSKIPGSLKVKINCQVAPTCGIGLAVSYVEGNESANLGSSLGRLLGIQHYKWNPAIEPYVEFVFKPFSCADWWNMHYLGSFKFAPVVVIQTLSKWLNAPKVDARISFAIYYEPTVVLPKQIATLEHAPAFMFRKEVGTLAFKQGERVAYSFEVNLGKPQTDGKEVTSTFASSYCGLSQYMQSDVILDFTLMSSPMIGGTFSIAYVAGAYIEKVGNMQILDSLPHIDFTFSSGSKSTRSVRFPKEVFGVYQALDRWDLDSARGDDVSGNFVLYQRDAVSSALEGELTFRIAARLSGDISFTGVSAGYPTTITRIGKGKTIGRSLDPEIRKPLRYMLGQAHATPKDFSSVRFVMGHWKYRAGLYPGSKSDEDIHPFSLKMRLDGSKSSENFEIIHSPFVRLLQNCAWMRGTLRFYVVARASSDYMSYRRTSQLTVSAHENSLSSNQFYSGVLTSPSGELSFSREVVGPVDGFASMGWNVRGSKKFYKIHVEMGNVHEYDTVVLYGQFDSNVEFAGQRKGGHYLLEKETPIFKTIKY</sequence>
<organism>
    <name type="scientific">Broad bean wilt virus 2</name>
    <name type="common">BBWV-2</name>
    <dbReference type="NCBI Taxonomy" id="76875"/>
    <lineage>
        <taxon>Viruses</taxon>
        <taxon>Riboviria</taxon>
        <taxon>Orthornavirae</taxon>
        <taxon>Pisuviricota</taxon>
        <taxon>Pisoniviricetes</taxon>
        <taxon>Picornavirales</taxon>
        <taxon>Secoviridae</taxon>
        <taxon>Comovirinae</taxon>
        <taxon>Fabavirus</taxon>
        <taxon>Fabavirus betaviciae</taxon>
    </lineage>
</organism>
<reference key="1">
    <citation type="journal article" date="2000" name="Prog. Nat. Sci.">
        <title>Nucleotide sequence of RNA2 and polyprotein processing sites of a Chinese isolate of broad bean wilt virus 2.</title>
        <authorList>
            <person name="Qi Y."/>
            <person name="Zhou X."/>
            <person name="Xue C."/>
            <person name="Li D."/>
        </authorList>
    </citation>
    <scope>NUCLEOTIDE SEQUENCE [GENOMIC RNA]</scope>
    <source>
        <strain>B935</strain>
    </source>
</reference>
<reference key="2">
    <citation type="journal article" date="2002" name="Arch. Virol.">
        <title>In vivo accumulation of Broad bean wilt virus 2 VP37 protein and its ability to bind single-stranded nucleic acid.</title>
        <authorList>
            <person name="Qi Y.J."/>
            <person name="Zhou X.P."/>
            <person name="Huang X.Z."/>
            <person name="Li G.X."/>
        </authorList>
    </citation>
    <scope>RNA-BINDING</scope>
    <scope>FUNCTION (MOVEMENT PROTEIN)</scope>
</reference>
<reference key="3">
    <citation type="journal article" date="2009" name="Virus Res.">
        <title>Cell-to-cell trafficking, subcellular distribution, and binding to coat protein of Broad bean wilt virus 2 VP37 protein.</title>
        <authorList>
            <person name="Liu C."/>
            <person name="Meng C."/>
            <person name="Xie L."/>
            <person name="Hong J."/>
            <person name="Zhou X."/>
        </authorList>
    </citation>
    <scope>FUNCTION (MOVEMENT PROTEIN)</scope>
    <scope>INTERACTION WITH THE SMALL CAPSID PROTEIN (MOVEMENT PROTEIN)</scope>
    <scope>INTERACTION WITH THE MOVEMENT PROTEIN (SMALL CAPSID PROTEIN)</scope>
    <scope>SUBCELLULAR LOCATION (MOVEMENT PROTEIN)</scope>
    <scope>DOMAIN (MOVEMENT PROTEIN)</scope>
</reference>
<reference key="4">
    <citation type="journal article" date="2011" name="Virus Res.">
        <title>The VP37 protein of Broad bean wilt virus 2 induces tubule-like structures in both plant and insect cells.</title>
        <authorList>
            <person name="Liu C."/>
            <person name="Ye L."/>
            <person name="Lang G."/>
            <person name="Zhang C."/>
            <person name="Hong J."/>
            <person name="Zhou X."/>
        </authorList>
    </citation>
    <scope>FUNCTION (MOVEMENT PROTEIN)</scope>
    <scope>SUBCELLULAR LOCATION (MOVEMENT PROTEIN)</scope>
</reference>
<reference key="5">
    <citation type="journal article" date="2014" name="Virus Res.">
        <title>Broad bean wilt virus 2 encoded VP53, VP37 and large capsid protein orchestrate suppression of RNA silencing in plant.</title>
        <authorList>
            <person name="Kong L."/>
            <person name="Wang Y."/>
            <person name="Yang X."/>
            <person name="Sunter G."/>
            <person name="Zhou X."/>
        </authorList>
    </citation>
    <scope>FUNCTION (MOVEMENT PROTEIN)</scope>
    <scope>FUNCTION (LARGE CAPSID PROTEIN)</scope>
    <scope>FUNCTION (VP53)</scope>
    <scope>DOMAIN (VP53)</scope>
    <scope>RNA-BINDING (LARGE CAPSID PROTEIN)</scope>
    <scope>RNA-BINDING (VP53)</scope>
</reference>
<reference key="6">
    <citation type="journal article" date="2016" name="Sci. Rep.">
        <title>Mutual association of Broad bean wilt virus 2 VP37-derived tubules and plasmodesmata obtained from cytological observation.</title>
        <authorList>
            <person name="Xie L."/>
            <person name="Shang W."/>
            <person name="Liu C."/>
            <person name="Zhang Q."/>
            <person name="Sunter G."/>
            <person name="Hong J."/>
            <person name="Zhou X."/>
        </authorList>
    </citation>
    <scope>FUNCTION (MOVEMENT PROTEIN)</scope>
    <scope>SUBCELLULAR LOCATION (MOVEMENT PROTEIN)</scope>
</reference>
<comment type="function">
    <molecule>VP53</molecule>
    <text evidence="5">Acts as a suppressor of post-transcriptional gene silencing (PTGS), a mechanism of plant viral defense that limits the accumulation of viral RNAs (PubMed:25173697). Binds ssRNA (PubMed:25173697).</text>
</comment>
<comment type="function">
    <molecule>Movement protein</molecule>
    <text evidence="2 3 4 5 6">Transports the viral genome to neighboring plant cells directly through plasmosdesmata, without any budding (PubMed:19463725). The movement protein allows efficient cell to cell propagation, by bypassing the host cell wall barrier (PubMed:19463725). Acts by forming a tubular structure at the host plasmodesmata, enlarging it enough to allow free passage of virion capsids (PubMed:20832435, PubMed:26903400). Binds to GTP and to single-stranded RNA and single-stranded DNA in a non-sequence-specific manner (PubMed:12021864). Also acts as a suppressor of post-transcriptional gene silencing (PTGS), a mechanism of plant viral defense that limits the accumulation of viral RNAs (PubMed:25173697).</text>
</comment>
<comment type="function">
    <molecule>Large capsid protein</molecule>
    <text evidence="1 5">Together with the small capsid protein, forms an icosahedral capsid (T=3) enclosing the viral positive strand RNA genome, with a diameter of approximately 300 Angstroms (By similarity). The large capsid protein interacts with the viral RNA (By similarity). Also acts as a suppressor of post-transcriptional gene silencing (PTGS), a mechanism of plant viral defense that limits the accumulation of viral RNAs (PubMed:25173697). Binds ssRNA (PubMed:25173697).</text>
</comment>
<comment type="function">
    <molecule>Small capsid protein</molecule>
    <text evidence="1">Together with the large capsid protein, forms an icosahedral capsid (T=3) enclosing the viral positive strand RNA genome, with a diameter of approximately 300 Angstroms (By similarity). The capsid is formed from 60 copies each of the large and the small capsid protein. The small capsid protein forms the turrets at the fivefold axes of the viral particle (By similarity).</text>
</comment>
<comment type="subunit">
    <molecule>Small capsid protein</molecule>
    <text evidence="1 3">Interacts with the large capsid protein (By similarity). Interacts with the movement protein (via C-terminus) (PubMed:19463725).</text>
</comment>
<comment type="subunit">
    <molecule>Large capsid protein</molecule>
    <text evidence="1">Interacts with the small capsid protein (By similarity). Homomultimer; assembles as pentons (By similarity).</text>
</comment>
<comment type="subunit">
    <molecule>Movement protein</molecule>
    <text evidence="3">Interacts (via C-terminus) with the small capsid protein (PubMed:19463725).</text>
</comment>
<comment type="subcellular location">
    <molecule>Movement protein</molecule>
    <subcellularLocation>
        <location evidence="3">Host endoplasmic reticulum</location>
    </subcellularLocation>
    <subcellularLocation>
        <location evidence="3 4 6">Host cell junction</location>
        <location evidence="3 4 6">Host plasmodesma</location>
    </subcellularLocation>
    <text evidence="1">Assembles in tubules that are embedded within modified plasmodesmata.</text>
</comment>
<comment type="subcellular location">
    <molecule>Large capsid protein</molecule>
    <subcellularLocation>
        <location evidence="1">Virion</location>
    </subcellularLocation>
</comment>
<comment type="subcellular location">
    <molecule>Small capsid protein</molecule>
    <subcellularLocation>
        <location evidence="1">Virion</location>
    </subcellularLocation>
</comment>
<comment type="alternative products">
    <event type="alternative initiation"/>
    <isoform>
        <id>Q9Q2Q3-1</id>
        <name>RNA2 polyprotein</name>
        <name>119kDa protein</name>
        <sequence type="displayed"/>
    </isoform>
    <isoform>
        <id>Q9Q2Q3-2</id>
        <name>RNA2 polyprotein 104kDa</name>
        <name>104kDa protein</name>
        <sequence type="described" ref="VSP_059983"/>
    </isoform>
</comment>
<comment type="domain">
    <molecule>Movement protein</molecule>
    <text evidence="3">The C-terminus is important for targeting the movement protein to the plasmodesmata.</text>
</comment>
<comment type="domain">
    <molecule>VP53</molecule>
    <text evidence="5">The N-terminus is involved in ssRNA-binding.</text>
</comment>
<comment type="PTM">
    <molecule>RNA2 polyprotein</molecule>
    <text evidence="1">Specific enzymatic cleavages by picornain 3C-like protease in vivo yield mature proteins.</text>
</comment>
<keyword id="KW-0024">Alternative initiation</keyword>
<keyword id="KW-0167">Capsid protein</keyword>
<keyword id="KW-0238">DNA-binding</keyword>
<keyword id="KW-1031">Host cell junction</keyword>
<keyword id="KW-1038">Host endoplasmic reticulum</keyword>
<keyword id="KW-0945">Host-virus interaction</keyword>
<keyword id="KW-1090">Inhibition of host innate immune response by virus</keyword>
<keyword id="KW-0694">RNA-binding</keyword>
<keyword id="KW-0941">Suppressor of RNA silencing</keyword>
<keyword id="KW-1142">T=3 icosahedral capsid protein</keyword>
<keyword id="KW-0813">Transport</keyword>
<keyword id="KW-0899">Viral immunoevasion</keyword>
<keyword id="KW-0916">Viral movement protein</keyword>
<keyword id="KW-0946">Virion</keyword>
<name>POL2_BBWV2</name>
<accession>Q9Q2Q3</accession>
<accession>Q9Q2Q2</accession>
<feature type="chain" id="PRO_0000445863" description="RNA2 polyprotein">
    <location>
        <begin position="1"/>
        <end position="1065"/>
    </location>
</feature>
<feature type="chain" id="PRO_0000445864" description="VP53">
    <location>
        <begin position="1"/>
        <end position="466"/>
    </location>
</feature>
<feature type="chain" id="PRO_0000445865" description="Movement protein">
    <location>
        <begin position="129"/>
        <end position="466"/>
    </location>
</feature>
<feature type="chain" id="PRO_0000445866" description="Large capsid protein">
    <location>
        <begin position="467"/>
        <end position="868"/>
    </location>
</feature>
<feature type="chain" id="PRO_0000445867" description="Small capsid protein">
    <location>
        <begin position="869"/>
        <end position="1065"/>
    </location>
</feature>
<feature type="site" description="Cleavage; by viral protease" evidence="1">
    <location>
        <begin position="466"/>
        <end position="467"/>
    </location>
</feature>
<feature type="site" description="Cleavage; by viral protease" evidence="1">
    <location>
        <begin position="868"/>
        <end position="869"/>
    </location>
</feature>
<feature type="splice variant" id="VSP_059983" description="In isoform RNA2 polyprotein 104kDa.">
    <location>
        <begin position="1"/>
        <end position="128"/>
    </location>
</feature>